<organism>
    <name type="scientific">Pongo abelii</name>
    <name type="common">Sumatran orangutan</name>
    <name type="synonym">Pongo pygmaeus abelii</name>
    <dbReference type="NCBI Taxonomy" id="9601"/>
    <lineage>
        <taxon>Eukaryota</taxon>
        <taxon>Metazoa</taxon>
        <taxon>Chordata</taxon>
        <taxon>Craniata</taxon>
        <taxon>Vertebrata</taxon>
        <taxon>Euteleostomi</taxon>
        <taxon>Mammalia</taxon>
        <taxon>Eutheria</taxon>
        <taxon>Euarchontoglires</taxon>
        <taxon>Primates</taxon>
        <taxon>Haplorrhini</taxon>
        <taxon>Catarrhini</taxon>
        <taxon>Hominidae</taxon>
        <taxon>Pongo</taxon>
    </lineage>
</organism>
<accession>Q5R7Z3</accession>
<reference key="1">
    <citation type="submission" date="2004-11" db="EMBL/GenBank/DDBJ databases">
        <authorList>
            <consortium name="The German cDNA consortium"/>
        </authorList>
    </citation>
    <scope>NUCLEOTIDE SEQUENCE [LARGE SCALE MRNA]</scope>
    <source>
        <tissue>Kidney</tissue>
    </source>
</reference>
<gene>
    <name type="primary">TRAM1</name>
    <name evidence="1" type="synonym">TRAM</name>
</gene>
<proteinExistence type="evidence at transcript level"/>
<comment type="function">
    <text evidence="1">Involved in the translocation of nascent protein chains into or through the endoplasmic reticulum (ER) membrane by facilitating the proper chain positioning at the SEC61 channel. Regulates the exposure of nascent secretory protein chain to the cytosol during translocation into the ER. May affect the phospholipid bilayer in the vicinity of the lateral gate of the SEC61 channel, thereby facilitating ER protein transport. Intimately associates with transmembrane (TM) domain of nascent membrane proteins during the entire integration process into the ER membrane. Associates with the second TM domain of G-protein-coupled receptor opsin/OPSD nascent chain in the ER membrane, which may facilitate its integration into the membrane. Under conditions of ER stress, participates in the disposal of misfolded ER membrane proteins during the unfolded protein response (UPR), an integrated stress response (ISR) pathway, by selectively retrotranslocating misfolded ER-membrane proteins from the ER into the cytosol where they are ubiquitinated and degraded by the proteasome.</text>
</comment>
<comment type="subunit">
    <text evidence="1">Interacts with SEC61B. May interact with Derlin-1/DERL1.</text>
</comment>
<comment type="subcellular location">
    <subcellularLocation>
        <location evidence="1">Endoplasmic reticulum membrane</location>
        <topology evidence="3">Multi-pass membrane protein</topology>
    </subcellularLocation>
</comment>
<comment type="PTM">
    <text evidence="1">N-glycosylated.</text>
</comment>
<comment type="similarity">
    <text evidence="6">Belongs to the TRAM family.</text>
</comment>
<evidence type="ECO:0000250" key="1">
    <source>
        <dbReference type="UniProtKB" id="Q15629"/>
    </source>
</evidence>
<evidence type="ECO:0000250" key="2">
    <source>
        <dbReference type="UniProtKB" id="Q91V04"/>
    </source>
</evidence>
<evidence type="ECO:0000255" key="3"/>
<evidence type="ECO:0000255" key="4">
    <source>
        <dbReference type="PROSITE-ProRule" id="PRU00205"/>
    </source>
</evidence>
<evidence type="ECO:0000256" key="5">
    <source>
        <dbReference type="SAM" id="MobiDB-lite"/>
    </source>
</evidence>
<evidence type="ECO:0000305" key="6"/>
<dbReference type="EMBL" id="CR859964">
    <property type="protein sequence ID" value="CAH92117.1"/>
    <property type="molecule type" value="mRNA"/>
</dbReference>
<dbReference type="RefSeq" id="NP_001126237.1">
    <property type="nucleotide sequence ID" value="NM_001132765.2"/>
</dbReference>
<dbReference type="SMR" id="Q5R7Z3"/>
<dbReference type="STRING" id="9601.ENSPPYP00000020934"/>
<dbReference type="GlyCosmos" id="Q5R7Z3">
    <property type="glycosylation" value="1 site, No reported glycans"/>
</dbReference>
<dbReference type="GeneID" id="100173207"/>
<dbReference type="KEGG" id="pon:100173207"/>
<dbReference type="CTD" id="23471"/>
<dbReference type="eggNOG" id="KOG1608">
    <property type="taxonomic scope" value="Eukaryota"/>
</dbReference>
<dbReference type="InParanoid" id="Q5R7Z3"/>
<dbReference type="OrthoDB" id="3053196at2759"/>
<dbReference type="Proteomes" id="UP000001595">
    <property type="component" value="Unplaced"/>
</dbReference>
<dbReference type="GO" id="GO:0005789">
    <property type="term" value="C:endoplasmic reticulum membrane"/>
    <property type="evidence" value="ECO:0000250"/>
    <property type="project" value="UniProtKB"/>
</dbReference>
<dbReference type="GO" id="GO:0006613">
    <property type="term" value="P:cotranslational protein targeting to membrane"/>
    <property type="evidence" value="ECO:0000250"/>
    <property type="project" value="UniProtKB"/>
</dbReference>
<dbReference type="GO" id="GO:0045048">
    <property type="term" value="P:protein insertion into ER membrane"/>
    <property type="evidence" value="ECO:0000250"/>
    <property type="project" value="UniProtKB"/>
</dbReference>
<dbReference type="GO" id="GO:0006986">
    <property type="term" value="P:response to unfolded protein"/>
    <property type="evidence" value="ECO:0000250"/>
    <property type="project" value="UniProtKB"/>
</dbReference>
<dbReference type="GO" id="GO:0006616">
    <property type="term" value="P:SRP-dependent cotranslational protein targeting to membrane, translocation"/>
    <property type="evidence" value="ECO:0007669"/>
    <property type="project" value="InterPro"/>
</dbReference>
<dbReference type="InterPro" id="IPR006634">
    <property type="entry name" value="TLC-dom"/>
</dbReference>
<dbReference type="InterPro" id="IPR016447">
    <property type="entry name" value="Translocation_assoc_membrane"/>
</dbReference>
<dbReference type="PANTHER" id="PTHR12371:SF3">
    <property type="entry name" value="TRANSLOCATING CHAIN-ASSOCIATED MEMBRANE PROTEIN 1"/>
    <property type="match status" value="1"/>
</dbReference>
<dbReference type="PANTHER" id="PTHR12371">
    <property type="entry name" value="TRANSLOCATION ASSOCIATED MEMBRANE PROTEIN"/>
    <property type="match status" value="1"/>
</dbReference>
<dbReference type="Pfam" id="PF03798">
    <property type="entry name" value="TRAM_LAG1_CLN8"/>
    <property type="match status" value="1"/>
</dbReference>
<dbReference type="PIRSF" id="PIRSF005449">
    <property type="entry name" value="Translocation_assoc_membrane"/>
    <property type="match status" value="1"/>
</dbReference>
<dbReference type="SMART" id="SM00724">
    <property type="entry name" value="TLC"/>
    <property type="match status" value="1"/>
</dbReference>
<dbReference type="PROSITE" id="PS50922">
    <property type="entry name" value="TLC"/>
    <property type="match status" value="1"/>
</dbReference>
<feature type="chain" id="PRO_0000240444" description="Translocating chain-associated membrane protein 1">
    <location>
        <begin position="1"/>
        <end position="374"/>
    </location>
</feature>
<feature type="topological domain" description="Cytoplasmic" evidence="2">
    <location>
        <begin position="1"/>
        <end position="29"/>
    </location>
</feature>
<feature type="transmembrane region" description="Helical" evidence="3">
    <location>
        <begin position="30"/>
        <end position="50"/>
    </location>
</feature>
<feature type="topological domain" description="Lumenal" evidence="2">
    <location>
        <begin position="51"/>
        <end position="76"/>
    </location>
</feature>
<feature type="transmembrane region" description="Helical" evidence="3">
    <location>
        <begin position="77"/>
        <end position="97"/>
    </location>
</feature>
<feature type="topological domain" description="Cytoplasmic" evidence="2">
    <location>
        <begin position="98"/>
        <end position="121"/>
    </location>
</feature>
<feature type="transmembrane region" description="Helical" evidence="3">
    <location>
        <begin position="122"/>
        <end position="142"/>
    </location>
</feature>
<feature type="topological domain" description="Lumenal" evidence="2">
    <location>
        <begin position="143"/>
        <end position="159"/>
    </location>
</feature>
<feature type="transmembrane region" description="Helical" evidence="3">
    <location>
        <begin position="160"/>
        <end position="180"/>
    </location>
</feature>
<feature type="topological domain" description="Cytoplasmic" evidence="2">
    <location>
        <begin position="181"/>
        <end position="192"/>
    </location>
</feature>
<feature type="transmembrane region" description="Helical" evidence="3">
    <location>
        <begin position="193"/>
        <end position="213"/>
    </location>
</feature>
<feature type="topological domain" description="Lumenal" evidence="2">
    <location>
        <position position="214"/>
    </location>
</feature>
<feature type="transmembrane region" description="Helical" evidence="3">
    <location>
        <begin position="215"/>
        <end position="235"/>
    </location>
</feature>
<feature type="topological domain" description="Cytoplasmic" evidence="2">
    <location>
        <begin position="236"/>
        <end position="251"/>
    </location>
</feature>
<feature type="transmembrane region" description="Helical" evidence="3">
    <location>
        <begin position="252"/>
        <end position="272"/>
    </location>
</feature>
<feature type="topological domain" description="Lumenal" evidence="2">
    <location>
        <begin position="273"/>
        <end position="297"/>
    </location>
</feature>
<feature type="transmembrane region" description="Helical" evidence="3">
    <location>
        <begin position="298"/>
        <end position="318"/>
    </location>
</feature>
<feature type="topological domain" description="Cytoplasmic" evidence="2">
    <location>
        <begin position="319"/>
        <end position="374"/>
    </location>
</feature>
<feature type="domain" description="TLC" evidence="4">
    <location>
        <begin position="117"/>
        <end position="326"/>
    </location>
</feature>
<feature type="region of interest" description="Disordered" evidence="5">
    <location>
        <begin position="334"/>
        <end position="374"/>
    </location>
</feature>
<feature type="compositionally biased region" description="Basic residues" evidence="5">
    <location>
        <begin position="334"/>
        <end position="347"/>
    </location>
</feature>
<feature type="compositionally biased region" description="Polar residues" evidence="5">
    <location>
        <begin position="352"/>
        <end position="363"/>
    </location>
</feature>
<feature type="modified residue" description="Phosphoserine" evidence="1">
    <location>
        <position position="365"/>
    </location>
</feature>
<feature type="glycosylation site" description="N-linked (GlcNAc...) asparagine" evidence="3">
    <location>
        <position position="56"/>
    </location>
</feature>
<sequence>MAIRKKSTKSPPVLSHEFVLQNHADIVSCVAMVFLLGLMFEITAKASIIFVTLQYNVTLPATEEQATESASLYYYGIKDLATVFFYMLVAIIIHAVIQEYMLDKINRRMHFSKTKHSKFNESGQLSAFYLFACVWGTFILISENYISDPTILWRAYPHNLMTFQMKFFYISQLAYWLHAFPELYFQKTKREDIPRQLVYIGLYLFHIAGAYLLNLNHLGLVLLVLHYFVEFLFHISRLFYFSNEKYQKGFSLWAVLFVLGRLLTLILSVLTVGFGLARAENQKLDFSTGNFNVLAVRIAVLASICITQAFMVWKFINFQLRRWREHSAFQAPAVKKKPTVTKGRSSKKGTENGVNGTLTSNVADSPRNKKEKSS</sequence>
<keyword id="KW-0256">Endoplasmic reticulum</keyword>
<keyword id="KW-0325">Glycoprotein</keyword>
<keyword id="KW-0472">Membrane</keyword>
<keyword id="KW-0597">Phosphoprotein</keyword>
<keyword id="KW-0653">Protein transport</keyword>
<keyword id="KW-1185">Reference proteome</keyword>
<keyword id="KW-0811">Translocation</keyword>
<keyword id="KW-0812">Transmembrane</keyword>
<keyword id="KW-1133">Transmembrane helix</keyword>
<keyword id="KW-0813">Transport</keyword>
<protein>
    <recommendedName>
        <fullName evidence="1">Translocating chain-associated membrane protein 1</fullName>
        <shortName evidence="1">Protein TRAM1</shortName>
    </recommendedName>
</protein>
<name>TRAM1_PONAB</name>